<reference key="1">
    <citation type="journal article" date="2005" name="Science">
        <title>The transcriptional landscape of the mammalian genome.</title>
        <authorList>
            <person name="Carninci P."/>
            <person name="Kasukawa T."/>
            <person name="Katayama S."/>
            <person name="Gough J."/>
            <person name="Frith M.C."/>
            <person name="Maeda N."/>
            <person name="Oyama R."/>
            <person name="Ravasi T."/>
            <person name="Lenhard B."/>
            <person name="Wells C."/>
            <person name="Kodzius R."/>
            <person name="Shimokawa K."/>
            <person name="Bajic V.B."/>
            <person name="Brenner S.E."/>
            <person name="Batalov S."/>
            <person name="Forrest A.R."/>
            <person name="Zavolan M."/>
            <person name="Davis M.J."/>
            <person name="Wilming L.G."/>
            <person name="Aidinis V."/>
            <person name="Allen J.E."/>
            <person name="Ambesi-Impiombato A."/>
            <person name="Apweiler R."/>
            <person name="Aturaliya R.N."/>
            <person name="Bailey T.L."/>
            <person name="Bansal M."/>
            <person name="Baxter L."/>
            <person name="Beisel K.W."/>
            <person name="Bersano T."/>
            <person name="Bono H."/>
            <person name="Chalk A.M."/>
            <person name="Chiu K.P."/>
            <person name="Choudhary V."/>
            <person name="Christoffels A."/>
            <person name="Clutterbuck D.R."/>
            <person name="Crowe M.L."/>
            <person name="Dalla E."/>
            <person name="Dalrymple B.P."/>
            <person name="de Bono B."/>
            <person name="Della Gatta G."/>
            <person name="di Bernardo D."/>
            <person name="Down T."/>
            <person name="Engstrom P."/>
            <person name="Fagiolini M."/>
            <person name="Faulkner G."/>
            <person name="Fletcher C.F."/>
            <person name="Fukushima T."/>
            <person name="Furuno M."/>
            <person name="Futaki S."/>
            <person name="Gariboldi M."/>
            <person name="Georgii-Hemming P."/>
            <person name="Gingeras T.R."/>
            <person name="Gojobori T."/>
            <person name="Green R.E."/>
            <person name="Gustincich S."/>
            <person name="Harbers M."/>
            <person name="Hayashi Y."/>
            <person name="Hensch T.K."/>
            <person name="Hirokawa N."/>
            <person name="Hill D."/>
            <person name="Huminiecki L."/>
            <person name="Iacono M."/>
            <person name="Ikeo K."/>
            <person name="Iwama A."/>
            <person name="Ishikawa T."/>
            <person name="Jakt M."/>
            <person name="Kanapin A."/>
            <person name="Katoh M."/>
            <person name="Kawasawa Y."/>
            <person name="Kelso J."/>
            <person name="Kitamura H."/>
            <person name="Kitano H."/>
            <person name="Kollias G."/>
            <person name="Krishnan S.P."/>
            <person name="Kruger A."/>
            <person name="Kummerfeld S.K."/>
            <person name="Kurochkin I.V."/>
            <person name="Lareau L.F."/>
            <person name="Lazarevic D."/>
            <person name="Lipovich L."/>
            <person name="Liu J."/>
            <person name="Liuni S."/>
            <person name="McWilliam S."/>
            <person name="Madan Babu M."/>
            <person name="Madera M."/>
            <person name="Marchionni L."/>
            <person name="Matsuda H."/>
            <person name="Matsuzawa S."/>
            <person name="Miki H."/>
            <person name="Mignone F."/>
            <person name="Miyake S."/>
            <person name="Morris K."/>
            <person name="Mottagui-Tabar S."/>
            <person name="Mulder N."/>
            <person name="Nakano N."/>
            <person name="Nakauchi H."/>
            <person name="Ng P."/>
            <person name="Nilsson R."/>
            <person name="Nishiguchi S."/>
            <person name="Nishikawa S."/>
            <person name="Nori F."/>
            <person name="Ohara O."/>
            <person name="Okazaki Y."/>
            <person name="Orlando V."/>
            <person name="Pang K.C."/>
            <person name="Pavan W.J."/>
            <person name="Pavesi G."/>
            <person name="Pesole G."/>
            <person name="Petrovsky N."/>
            <person name="Piazza S."/>
            <person name="Reed J."/>
            <person name="Reid J.F."/>
            <person name="Ring B.Z."/>
            <person name="Ringwald M."/>
            <person name="Rost B."/>
            <person name="Ruan Y."/>
            <person name="Salzberg S.L."/>
            <person name="Sandelin A."/>
            <person name="Schneider C."/>
            <person name="Schoenbach C."/>
            <person name="Sekiguchi K."/>
            <person name="Semple C.A."/>
            <person name="Seno S."/>
            <person name="Sessa L."/>
            <person name="Sheng Y."/>
            <person name="Shibata Y."/>
            <person name="Shimada H."/>
            <person name="Shimada K."/>
            <person name="Silva D."/>
            <person name="Sinclair B."/>
            <person name="Sperling S."/>
            <person name="Stupka E."/>
            <person name="Sugiura K."/>
            <person name="Sultana R."/>
            <person name="Takenaka Y."/>
            <person name="Taki K."/>
            <person name="Tammoja K."/>
            <person name="Tan S.L."/>
            <person name="Tang S."/>
            <person name="Taylor M.S."/>
            <person name="Tegner J."/>
            <person name="Teichmann S.A."/>
            <person name="Ueda H.R."/>
            <person name="van Nimwegen E."/>
            <person name="Verardo R."/>
            <person name="Wei C.L."/>
            <person name="Yagi K."/>
            <person name="Yamanishi H."/>
            <person name="Zabarovsky E."/>
            <person name="Zhu S."/>
            <person name="Zimmer A."/>
            <person name="Hide W."/>
            <person name="Bult C."/>
            <person name="Grimmond S.M."/>
            <person name="Teasdale R.D."/>
            <person name="Liu E.T."/>
            <person name="Brusic V."/>
            <person name="Quackenbush J."/>
            <person name="Wahlestedt C."/>
            <person name="Mattick J.S."/>
            <person name="Hume D.A."/>
            <person name="Kai C."/>
            <person name="Sasaki D."/>
            <person name="Tomaru Y."/>
            <person name="Fukuda S."/>
            <person name="Kanamori-Katayama M."/>
            <person name="Suzuki M."/>
            <person name="Aoki J."/>
            <person name="Arakawa T."/>
            <person name="Iida J."/>
            <person name="Imamura K."/>
            <person name="Itoh M."/>
            <person name="Kato T."/>
            <person name="Kawaji H."/>
            <person name="Kawagashira N."/>
            <person name="Kawashima T."/>
            <person name="Kojima M."/>
            <person name="Kondo S."/>
            <person name="Konno H."/>
            <person name="Nakano K."/>
            <person name="Ninomiya N."/>
            <person name="Nishio T."/>
            <person name="Okada M."/>
            <person name="Plessy C."/>
            <person name="Shibata K."/>
            <person name="Shiraki T."/>
            <person name="Suzuki S."/>
            <person name="Tagami M."/>
            <person name="Waki K."/>
            <person name="Watahiki A."/>
            <person name="Okamura-Oho Y."/>
            <person name="Suzuki H."/>
            <person name="Kawai J."/>
            <person name="Hayashizaki Y."/>
        </authorList>
    </citation>
    <scope>NUCLEOTIDE SEQUENCE [LARGE SCALE MRNA]</scope>
    <source>
        <strain>C57BL/6J</strain>
        <tissue>Cerebellum</tissue>
        <tissue>Kidney</tissue>
        <tissue>Olfactory bulb</tissue>
    </source>
</reference>
<evidence type="ECO:0000255" key="1"/>
<evidence type="ECO:0000256" key="2">
    <source>
        <dbReference type="SAM" id="MobiDB-lite"/>
    </source>
</evidence>
<evidence type="ECO:0000305" key="3"/>
<feature type="chain" id="PRO_0000228842" description="Uncharacterized protein C3orf18 homolog">
    <location>
        <begin position="1"/>
        <end position="164"/>
    </location>
</feature>
<feature type="transmembrane region" description="Helical" evidence="1">
    <location>
        <begin position="64"/>
        <end position="84"/>
    </location>
</feature>
<feature type="region of interest" description="Disordered" evidence="2">
    <location>
        <begin position="1"/>
        <end position="48"/>
    </location>
</feature>
<feature type="coiled-coil region" evidence="1">
    <location>
        <begin position="106"/>
        <end position="130"/>
    </location>
</feature>
<feature type="compositionally biased region" description="Polar residues" evidence="2">
    <location>
        <begin position="1"/>
        <end position="17"/>
    </location>
</feature>
<feature type="compositionally biased region" description="Low complexity" evidence="2">
    <location>
        <begin position="24"/>
        <end position="45"/>
    </location>
</feature>
<feature type="sequence conflict" description="In Ref. 1; BAC39401." evidence="3" ref="1">
    <original>E</original>
    <variation>K</variation>
    <location>
        <position position="42"/>
    </location>
</feature>
<feature type="sequence conflict" description="In Ref. 1; BAC39401." evidence="3" ref="1">
    <original>P</original>
    <variation>S</variation>
    <location>
        <position position="52"/>
    </location>
</feature>
<feature type="sequence conflict" description="In Ref. 1; BAC39401." evidence="3" ref="1">
    <original>LL</original>
    <variation>FV</variation>
    <location>
        <begin position="65"/>
        <end position="66"/>
    </location>
</feature>
<keyword id="KW-0175">Coiled coil</keyword>
<keyword id="KW-0472">Membrane</keyword>
<keyword id="KW-1185">Reference proteome</keyword>
<keyword id="KW-0812">Transmembrane</keyword>
<keyword id="KW-1133">Transmembrane helix</keyword>
<protein>
    <recommendedName>
        <fullName>Uncharacterized protein C3orf18 homolog</fullName>
    </recommendedName>
</protein>
<dbReference type="EMBL" id="AK032358">
    <property type="protein sequence ID" value="BAC27833.1"/>
    <property type="molecule type" value="mRNA"/>
</dbReference>
<dbReference type="EMBL" id="AK032501">
    <property type="protein sequence ID" value="BAC27899.1"/>
    <property type="molecule type" value="mRNA"/>
</dbReference>
<dbReference type="EMBL" id="AK043338">
    <property type="protein sequence ID" value="BAC31524.1"/>
    <property type="molecule type" value="mRNA"/>
</dbReference>
<dbReference type="EMBL" id="AK085251">
    <property type="protein sequence ID" value="BAC39401.1"/>
    <property type="molecule type" value="mRNA"/>
</dbReference>
<dbReference type="CCDS" id="CCDS23489.1"/>
<dbReference type="RefSeq" id="NP_001420712.1">
    <property type="nucleotide sequence ID" value="NM_001433783.1"/>
</dbReference>
<dbReference type="RefSeq" id="NP_780695.1">
    <property type="nucleotide sequence ID" value="NM_175486.4"/>
</dbReference>
<dbReference type="SMR" id="Q8BGK9"/>
<dbReference type="FunCoup" id="Q8BGK9">
    <property type="interactions" value="8"/>
</dbReference>
<dbReference type="STRING" id="10090.ENSMUSP00000047093"/>
<dbReference type="PhosphoSitePlus" id="Q8BGK9"/>
<dbReference type="PaxDb" id="10090-ENSMUSP00000047093"/>
<dbReference type="Antibodypedia" id="2263">
    <property type="antibodies" value="83 antibodies from 15 providers"/>
</dbReference>
<dbReference type="DNASU" id="235599"/>
<dbReference type="Ensembl" id="ENSMUST00000042581.4">
    <property type="protein sequence ID" value="ENSMUSP00000047093.3"/>
    <property type="gene ID" value="ENSMUSG00000037977.7"/>
</dbReference>
<dbReference type="GeneID" id="235599"/>
<dbReference type="KEGG" id="mmu:235599"/>
<dbReference type="UCSC" id="uc009rlg.1">
    <property type="organism name" value="mouse"/>
</dbReference>
<dbReference type="AGR" id="MGI:2445137"/>
<dbReference type="MGI" id="MGI:2445137">
    <property type="gene designation" value="6430571L13Rik"/>
</dbReference>
<dbReference type="VEuPathDB" id="HostDB:ENSMUSG00000037977"/>
<dbReference type="eggNOG" id="ENOG502RZ00">
    <property type="taxonomic scope" value="Eukaryota"/>
</dbReference>
<dbReference type="GeneTree" id="ENSGT00410000025882"/>
<dbReference type="HOGENOM" id="CLU_134497_1_0_1"/>
<dbReference type="InParanoid" id="Q8BGK9"/>
<dbReference type="OMA" id="MAMVLYI"/>
<dbReference type="OrthoDB" id="9941165at2759"/>
<dbReference type="PhylomeDB" id="Q8BGK9"/>
<dbReference type="TreeFam" id="TF332764"/>
<dbReference type="BioGRID-ORCS" id="235599">
    <property type="hits" value="4 hits in 77 CRISPR screens"/>
</dbReference>
<dbReference type="PRO" id="PR:Q8BGK9"/>
<dbReference type="Proteomes" id="UP000000589">
    <property type="component" value="Chromosome 9"/>
</dbReference>
<dbReference type="RNAct" id="Q8BGK9">
    <property type="molecule type" value="protein"/>
</dbReference>
<dbReference type="Bgee" id="ENSMUSG00000037977">
    <property type="expression patterns" value="Expressed in quadriceps femoris and 85 other cell types or tissues"/>
</dbReference>
<dbReference type="ExpressionAtlas" id="Q8BGK9">
    <property type="expression patterns" value="baseline and differential"/>
</dbReference>
<dbReference type="GO" id="GO:0016020">
    <property type="term" value="C:membrane"/>
    <property type="evidence" value="ECO:0007669"/>
    <property type="project" value="UniProtKB-SubCell"/>
</dbReference>
<dbReference type="InterPro" id="IPR042351">
    <property type="entry name" value="C3orf18-like"/>
</dbReference>
<dbReference type="PANTHER" id="PTHR15868">
    <property type="entry name" value="SIMILAR TO RIKEN CDNA 6430571L13 GENE, SIMILAR TO G20 PROTEIN"/>
    <property type="match status" value="1"/>
</dbReference>
<dbReference type="PANTHER" id="PTHR15868:SF0">
    <property type="entry name" value="SIMILAR TO RIKEN CDNA 6430571L13 GENE_ SIMILAR TO G20 PROTEIN"/>
    <property type="match status" value="1"/>
</dbReference>
<sequence length="164" mass="17721">MNSRVPATQSWFSSHLPTTEPDLEPATAAEGSTTETATLSPETTSFNDTRIPDVAGGAAGVGTMLLSFGIITVIGLAVAMVLYIRKKKRLEKLRHQLMPMYNFDPTEEQDELEQELLEHGRDAASMQAAASLQVTQGKSTLPSQGPLQRPSRLVFTDVANAIHA</sequence>
<name>CC018_MOUSE</name>
<comment type="subcellular location">
    <subcellularLocation>
        <location evidence="3">Membrane</location>
        <topology evidence="3">Single-pass membrane protein</topology>
    </subcellularLocation>
</comment>
<accession>Q8BGK9</accession>
<accession>Q8BUH0</accession>
<proteinExistence type="evidence at transcript level"/>
<organism>
    <name type="scientific">Mus musculus</name>
    <name type="common">Mouse</name>
    <dbReference type="NCBI Taxonomy" id="10090"/>
    <lineage>
        <taxon>Eukaryota</taxon>
        <taxon>Metazoa</taxon>
        <taxon>Chordata</taxon>
        <taxon>Craniata</taxon>
        <taxon>Vertebrata</taxon>
        <taxon>Euteleostomi</taxon>
        <taxon>Mammalia</taxon>
        <taxon>Eutheria</taxon>
        <taxon>Euarchontoglires</taxon>
        <taxon>Glires</taxon>
        <taxon>Rodentia</taxon>
        <taxon>Myomorpha</taxon>
        <taxon>Muroidea</taxon>
        <taxon>Muridae</taxon>
        <taxon>Murinae</taxon>
        <taxon>Mus</taxon>
        <taxon>Mus</taxon>
    </lineage>
</organism>